<dbReference type="EC" id="5.6.1.7" evidence="1"/>
<dbReference type="EMBL" id="CP000725">
    <property type="protein sequence ID" value="ABV10532.1"/>
    <property type="molecule type" value="Genomic_DNA"/>
</dbReference>
<dbReference type="RefSeq" id="WP_012130906.1">
    <property type="nucleotide sequence ID" value="NC_009785.1"/>
</dbReference>
<dbReference type="SMR" id="A8AZE1"/>
<dbReference type="STRING" id="467705.SGO_1885"/>
<dbReference type="KEGG" id="sgo:SGO_1885"/>
<dbReference type="eggNOG" id="COG0459">
    <property type="taxonomic scope" value="Bacteria"/>
</dbReference>
<dbReference type="HOGENOM" id="CLU_016503_3_0_9"/>
<dbReference type="Proteomes" id="UP000001131">
    <property type="component" value="Chromosome"/>
</dbReference>
<dbReference type="GO" id="GO:0005737">
    <property type="term" value="C:cytoplasm"/>
    <property type="evidence" value="ECO:0007669"/>
    <property type="project" value="UniProtKB-SubCell"/>
</dbReference>
<dbReference type="GO" id="GO:0005524">
    <property type="term" value="F:ATP binding"/>
    <property type="evidence" value="ECO:0007669"/>
    <property type="project" value="UniProtKB-UniRule"/>
</dbReference>
<dbReference type="GO" id="GO:0140662">
    <property type="term" value="F:ATP-dependent protein folding chaperone"/>
    <property type="evidence" value="ECO:0007669"/>
    <property type="project" value="InterPro"/>
</dbReference>
<dbReference type="GO" id="GO:0016853">
    <property type="term" value="F:isomerase activity"/>
    <property type="evidence" value="ECO:0007669"/>
    <property type="project" value="UniProtKB-KW"/>
</dbReference>
<dbReference type="GO" id="GO:0051082">
    <property type="term" value="F:unfolded protein binding"/>
    <property type="evidence" value="ECO:0007669"/>
    <property type="project" value="UniProtKB-UniRule"/>
</dbReference>
<dbReference type="GO" id="GO:0042026">
    <property type="term" value="P:protein refolding"/>
    <property type="evidence" value="ECO:0007669"/>
    <property type="project" value="UniProtKB-UniRule"/>
</dbReference>
<dbReference type="CDD" id="cd03344">
    <property type="entry name" value="GroEL"/>
    <property type="match status" value="1"/>
</dbReference>
<dbReference type="FunFam" id="1.10.560.10:FF:000001">
    <property type="entry name" value="60 kDa chaperonin"/>
    <property type="match status" value="1"/>
</dbReference>
<dbReference type="FunFam" id="3.50.7.10:FF:000001">
    <property type="entry name" value="60 kDa chaperonin"/>
    <property type="match status" value="1"/>
</dbReference>
<dbReference type="Gene3D" id="3.50.7.10">
    <property type="entry name" value="GroEL"/>
    <property type="match status" value="1"/>
</dbReference>
<dbReference type="Gene3D" id="1.10.560.10">
    <property type="entry name" value="GroEL-like equatorial domain"/>
    <property type="match status" value="1"/>
</dbReference>
<dbReference type="Gene3D" id="3.30.260.10">
    <property type="entry name" value="TCP-1-like chaperonin intermediate domain"/>
    <property type="match status" value="1"/>
</dbReference>
<dbReference type="HAMAP" id="MF_00600">
    <property type="entry name" value="CH60"/>
    <property type="match status" value="1"/>
</dbReference>
<dbReference type="InterPro" id="IPR018370">
    <property type="entry name" value="Chaperonin_Cpn60_CS"/>
</dbReference>
<dbReference type="InterPro" id="IPR001844">
    <property type="entry name" value="Cpn60/GroEL"/>
</dbReference>
<dbReference type="InterPro" id="IPR002423">
    <property type="entry name" value="Cpn60/GroEL/TCP-1"/>
</dbReference>
<dbReference type="InterPro" id="IPR027409">
    <property type="entry name" value="GroEL-like_apical_dom_sf"/>
</dbReference>
<dbReference type="InterPro" id="IPR027413">
    <property type="entry name" value="GROEL-like_equatorial_sf"/>
</dbReference>
<dbReference type="InterPro" id="IPR027410">
    <property type="entry name" value="TCP-1-like_intermed_sf"/>
</dbReference>
<dbReference type="NCBIfam" id="TIGR02348">
    <property type="entry name" value="GroEL"/>
    <property type="match status" value="1"/>
</dbReference>
<dbReference type="NCBIfam" id="NF000592">
    <property type="entry name" value="PRK00013.1"/>
    <property type="match status" value="1"/>
</dbReference>
<dbReference type="NCBIfam" id="NF009487">
    <property type="entry name" value="PRK12849.1"/>
    <property type="match status" value="1"/>
</dbReference>
<dbReference type="NCBIfam" id="NF009488">
    <property type="entry name" value="PRK12850.1"/>
    <property type="match status" value="1"/>
</dbReference>
<dbReference type="NCBIfam" id="NF009489">
    <property type="entry name" value="PRK12851.1"/>
    <property type="match status" value="1"/>
</dbReference>
<dbReference type="PANTHER" id="PTHR45633">
    <property type="entry name" value="60 KDA HEAT SHOCK PROTEIN, MITOCHONDRIAL"/>
    <property type="match status" value="1"/>
</dbReference>
<dbReference type="Pfam" id="PF00118">
    <property type="entry name" value="Cpn60_TCP1"/>
    <property type="match status" value="1"/>
</dbReference>
<dbReference type="PRINTS" id="PR00298">
    <property type="entry name" value="CHAPERONIN60"/>
</dbReference>
<dbReference type="SUPFAM" id="SSF52029">
    <property type="entry name" value="GroEL apical domain-like"/>
    <property type="match status" value="1"/>
</dbReference>
<dbReference type="SUPFAM" id="SSF48592">
    <property type="entry name" value="GroEL equatorial domain-like"/>
    <property type="match status" value="1"/>
</dbReference>
<dbReference type="SUPFAM" id="SSF54849">
    <property type="entry name" value="GroEL-intermediate domain like"/>
    <property type="match status" value="1"/>
</dbReference>
<dbReference type="PROSITE" id="PS00296">
    <property type="entry name" value="CHAPERONINS_CPN60"/>
    <property type="match status" value="1"/>
</dbReference>
<gene>
    <name evidence="1" type="primary">groEL</name>
    <name evidence="1" type="synonym">groL</name>
    <name type="ordered locus">SGO_1885</name>
</gene>
<feature type="chain" id="PRO_1000082494" description="Chaperonin GroEL">
    <location>
        <begin position="1"/>
        <end position="540"/>
    </location>
</feature>
<feature type="binding site" evidence="1">
    <location>
        <begin position="29"/>
        <end position="32"/>
    </location>
    <ligand>
        <name>ATP</name>
        <dbReference type="ChEBI" id="CHEBI:30616"/>
    </ligand>
</feature>
<feature type="binding site" evidence="1">
    <location>
        <begin position="86"/>
        <end position="90"/>
    </location>
    <ligand>
        <name>ATP</name>
        <dbReference type="ChEBI" id="CHEBI:30616"/>
    </ligand>
</feature>
<feature type="binding site" evidence="1">
    <location>
        <position position="413"/>
    </location>
    <ligand>
        <name>ATP</name>
        <dbReference type="ChEBI" id="CHEBI:30616"/>
    </ligand>
</feature>
<feature type="binding site" evidence="1">
    <location>
        <begin position="476"/>
        <end position="478"/>
    </location>
    <ligand>
        <name>ATP</name>
        <dbReference type="ChEBI" id="CHEBI:30616"/>
    </ligand>
</feature>
<feature type="binding site" evidence="1">
    <location>
        <position position="492"/>
    </location>
    <ligand>
        <name>ATP</name>
        <dbReference type="ChEBI" id="CHEBI:30616"/>
    </ligand>
</feature>
<evidence type="ECO:0000255" key="1">
    <source>
        <dbReference type="HAMAP-Rule" id="MF_00600"/>
    </source>
</evidence>
<protein>
    <recommendedName>
        <fullName evidence="1">Chaperonin GroEL</fullName>
        <ecNumber evidence="1">5.6.1.7</ecNumber>
    </recommendedName>
    <alternativeName>
        <fullName evidence="1">60 kDa chaperonin</fullName>
    </alternativeName>
    <alternativeName>
        <fullName evidence="1">Chaperonin-60</fullName>
        <shortName evidence="1">Cpn60</shortName>
    </alternativeName>
</protein>
<sequence length="540" mass="56754">MAKDIKFSADARSAMVRGVDILADTVKVTLGPKGRNVVLEKSFGSPLITNDGVTIAKEIELEDHFENMGAKLVSEVASKTNDIAGDGTTTATVLTQAIVREGIKNVTAGANPIGIRRGIEAAVATAVSALKETAIPVSNKEAIAQVAAVSSRSEKVGEYISEAMEKVGNDGVITIEESKGMETELDVVEGMQFDRGYLSQYMVTDSEKMVADLDNPYILITDKKISNIQEILPLLESILKTNRPLLIIADDVDGEALPTLVLNKIRGTFNVVAVKAPGFGDRRKAMLEDIAILTGGTVITEDLGLELKDATIEALGQASKVTVDKDSTVIVEGAGNPEAIANRVAVIKSQIESATSEFDKEKLQERLAKLSGGVAVIKVGAATETELKEMKLRIEDALNATRAAVEEGIVSGGGTAFVSVLDAVSGIELTGDEATGRNIVLRALEEPVRQIALNAGFEGSIVIDRLKNSEAGAGFNAATGEWVNMIEAGIIDPVKVTRSALQNAASVASLILTTEAVVANQPEPASPAPAMDPSMMGGMM</sequence>
<organism>
    <name type="scientific">Streptococcus gordonii (strain Challis / ATCC 35105 / BCRC 15272 / CH1 / DL1 / V288)</name>
    <dbReference type="NCBI Taxonomy" id="467705"/>
    <lineage>
        <taxon>Bacteria</taxon>
        <taxon>Bacillati</taxon>
        <taxon>Bacillota</taxon>
        <taxon>Bacilli</taxon>
        <taxon>Lactobacillales</taxon>
        <taxon>Streptococcaceae</taxon>
        <taxon>Streptococcus</taxon>
    </lineage>
</organism>
<proteinExistence type="inferred from homology"/>
<reference key="1">
    <citation type="journal article" date="2007" name="J. Bacteriol.">
        <title>Genome-wide transcriptional changes in Streptococcus gordonii in response to competence signaling peptide.</title>
        <authorList>
            <person name="Vickerman M.M."/>
            <person name="Iobst S."/>
            <person name="Jesionowski A.M."/>
            <person name="Gill S.R."/>
        </authorList>
    </citation>
    <scope>NUCLEOTIDE SEQUENCE [LARGE SCALE GENOMIC DNA]</scope>
    <source>
        <strain>Challis / ATCC 35105 / BCRC 15272 / CH1 / DL1 / V288</strain>
    </source>
</reference>
<keyword id="KW-0067">ATP-binding</keyword>
<keyword id="KW-0143">Chaperone</keyword>
<keyword id="KW-0963">Cytoplasm</keyword>
<keyword id="KW-0413">Isomerase</keyword>
<keyword id="KW-0547">Nucleotide-binding</keyword>
<keyword id="KW-1185">Reference proteome</keyword>
<name>CH60_STRGC</name>
<comment type="function">
    <text evidence="1">Together with its co-chaperonin GroES, plays an essential role in assisting protein folding. The GroEL-GroES system forms a nano-cage that allows encapsulation of the non-native substrate proteins and provides a physical environment optimized to promote and accelerate protein folding.</text>
</comment>
<comment type="catalytic activity">
    <reaction evidence="1">
        <text>ATP + H2O + a folded polypeptide = ADP + phosphate + an unfolded polypeptide.</text>
        <dbReference type="EC" id="5.6.1.7"/>
    </reaction>
</comment>
<comment type="subunit">
    <text evidence="1">Forms a cylinder of 14 subunits composed of two heptameric rings stacked back-to-back. Interacts with the co-chaperonin GroES.</text>
</comment>
<comment type="subcellular location">
    <subcellularLocation>
        <location evidence="1">Cytoplasm</location>
    </subcellularLocation>
</comment>
<comment type="similarity">
    <text evidence="1">Belongs to the chaperonin (HSP60) family.</text>
</comment>
<accession>A8AZE1</accession>